<comment type="function">
    <text>Metallothioneins have a high content of cysteine residues that bind various heavy metals; these proteins are transcriptionally regulated by both heavy metals and glucocorticoids.</text>
</comment>
<comment type="subunit">
    <text>Monomer.</text>
</comment>
<comment type="interaction">
    <interactant intactId="EBI-8045030">
        <id>P04731</id>
    </interactant>
    <interactant intactId="EBI-8550965">
        <id>Q13585</id>
        <label>GPR50</label>
    </interactant>
    <organismsDiffer>false</organismsDiffer>
    <experiments>3</experiments>
</comment>
<comment type="interaction">
    <interactant intactId="EBI-8045030">
        <id>P04731</id>
    </interactant>
    <interactant intactId="EBI-366083">
        <id>P04637</id>
        <label>TP53</label>
    </interactant>
    <organismsDiffer>false</organismsDiffer>
    <experiments>3</experiments>
</comment>
<comment type="domain">
    <text>Class I metallothioneins contain 2 metal-binding domains: four divalent ions are chelated within cluster A of the alpha domain and are coordinated via cysteinyl thiolate bridges to 11 cysteine ligands. Cluster B, the corresponding region within the beta domain, can ligate three divalent ions to 9 cysteines.</text>
</comment>
<comment type="similarity">
    <text evidence="5">Belongs to the metallothionein superfamily. Type 1 family.</text>
</comment>
<evidence type="ECO:0000250" key="1">
    <source>
        <dbReference type="UniProtKB" id="P02795"/>
    </source>
</evidence>
<evidence type="ECO:0000250" key="2">
    <source>
        <dbReference type="UniProtKB" id="P11957"/>
    </source>
</evidence>
<evidence type="ECO:0000269" key="3">
    <source>
    </source>
</evidence>
<evidence type="ECO:0000269" key="4">
    <source>
    </source>
</evidence>
<evidence type="ECO:0000305" key="5"/>
<reference key="1">
    <citation type="journal article" date="1984" name="Cell">
        <title>Structural and functional analysis of the human metallothionein-IA gene: differential induction by metal ions and glucocorticoids.</title>
        <authorList>
            <person name="Richards R.I."/>
            <person name="Heguy A."/>
            <person name="Karin M."/>
        </authorList>
    </citation>
    <scope>NUCLEOTIDE SEQUENCE [GENOMIC DNA]</scope>
    <scope>VARIANT ASN-27</scope>
</reference>
<reference key="2">
    <citation type="submission" date="2001-03" db="EMBL/GenBank/DDBJ databases">
        <title>Cloning of a novel member of the MT gene family - MT1S.</title>
        <authorList>
            <person name="Wang J."/>
            <person name="Zheng L."/>
            <person name="Yu L."/>
        </authorList>
    </citation>
    <scope>NUCLEOTIDE SEQUENCE [LARGE SCALE MRNA]</scope>
</reference>
<reference key="3">
    <citation type="journal article" date="2004" name="Nature">
        <title>The sequence and analysis of duplication-rich human chromosome 16.</title>
        <authorList>
            <person name="Martin J."/>
            <person name="Han C."/>
            <person name="Gordon L.A."/>
            <person name="Terry A."/>
            <person name="Prabhakar S."/>
            <person name="She X."/>
            <person name="Xie G."/>
            <person name="Hellsten U."/>
            <person name="Chan Y.M."/>
            <person name="Altherr M."/>
            <person name="Couronne O."/>
            <person name="Aerts A."/>
            <person name="Bajorek E."/>
            <person name="Black S."/>
            <person name="Blumer H."/>
            <person name="Branscomb E."/>
            <person name="Brown N.C."/>
            <person name="Bruno W.J."/>
            <person name="Buckingham J.M."/>
            <person name="Callen D.F."/>
            <person name="Campbell C.S."/>
            <person name="Campbell M.L."/>
            <person name="Campbell E.W."/>
            <person name="Caoile C."/>
            <person name="Challacombe J.F."/>
            <person name="Chasteen L.A."/>
            <person name="Chertkov O."/>
            <person name="Chi H.C."/>
            <person name="Christensen M."/>
            <person name="Clark L.M."/>
            <person name="Cohn J.D."/>
            <person name="Denys M."/>
            <person name="Detter J.C."/>
            <person name="Dickson M."/>
            <person name="Dimitrijevic-Bussod M."/>
            <person name="Escobar J."/>
            <person name="Fawcett J.J."/>
            <person name="Flowers D."/>
            <person name="Fotopulos D."/>
            <person name="Glavina T."/>
            <person name="Gomez M."/>
            <person name="Gonzales E."/>
            <person name="Goodstein D."/>
            <person name="Goodwin L.A."/>
            <person name="Grady D.L."/>
            <person name="Grigoriev I."/>
            <person name="Groza M."/>
            <person name="Hammon N."/>
            <person name="Hawkins T."/>
            <person name="Haydu L."/>
            <person name="Hildebrand C.E."/>
            <person name="Huang W."/>
            <person name="Israni S."/>
            <person name="Jett J."/>
            <person name="Jewett P.B."/>
            <person name="Kadner K."/>
            <person name="Kimball H."/>
            <person name="Kobayashi A."/>
            <person name="Krawczyk M.-C."/>
            <person name="Leyba T."/>
            <person name="Longmire J.L."/>
            <person name="Lopez F."/>
            <person name="Lou Y."/>
            <person name="Lowry S."/>
            <person name="Ludeman T."/>
            <person name="Manohar C.F."/>
            <person name="Mark G.A."/>
            <person name="McMurray K.L."/>
            <person name="Meincke L.J."/>
            <person name="Morgan J."/>
            <person name="Moyzis R.K."/>
            <person name="Mundt M.O."/>
            <person name="Munk A.C."/>
            <person name="Nandkeshwar R.D."/>
            <person name="Pitluck S."/>
            <person name="Pollard M."/>
            <person name="Predki P."/>
            <person name="Parson-Quintana B."/>
            <person name="Ramirez L."/>
            <person name="Rash S."/>
            <person name="Retterer J."/>
            <person name="Ricke D.O."/>
            <person name="Robinson D.L."/>
            <person name="Rodriguez A."/>
            <person name="Salamov A."/>
            <person name="Saunders E.H."/>
            <person name="Scott D."/>
            <person name="Shough T."/>
            <person name="Stallings R.L."/>
            <person name="Stalvey M."/>
            <person name="Sutherland R.D."/>
            <person name="Tapia R."/>
            <person name="Tesmer J.G."/>
            <person name="Thayer N."/>
            <person name="Thompson L.S."/>
            <person name="Tice H."/>
            <person name="Torney D.C."/>
            <person name="Tran-Gyamfi M."/>
            <person name="Tsai M."/>
            <person name="Ulanovsky L.E."/>
            <person name="Ustaszewska A."/>
            <person name="Vo N."/>
            <person name="White P.S."/>
            <person name="Williams A.L."/>
            <person name="Wills P.L."/>
            <person name="Wu J.-R."/>
            <person name="Wu K."/>
            <person name="Yang J."/>
            <person name="DeJong P."/>
            <person name="Bruce D."/>
            <person name="Doggett N.A."/>
            <person name="Deaven L."/>
            <person name="Schmutz J."/>
            <person name="Grimwood J."/>
            <person name="Richardson P."/>
            <person name="Rokhsar D.S."/>
            <person name="Eichler E.E."/>
            <person name="Gilna P."/>
            <person name="Lucas S.M."/>
            <person name="Myers R.M."/>
            <person name="Rubin E.M."/>
            <person name="Pennacchio L.A."/>
        </authorList>
    </citation>
    <scope>NUCLEOTIDE SEQUENCE [LARGE SCALE GENOMIC DNA]</scope>
</reference>
<reference key="4">
    <citation type="journal article" date="2004" name="Genome Res.">
        <title>The status, quality, and expansion of the NIH full-length cDNA project: the Mammalian Gene Collection (MGC).</title>
        <authorList>
            <consortium name="The MGC Project Team"/>
        </authorList>
    </citation>
    <scope>NUCLEOTIDE SEQUENCE [LARGE SCALE MRNA]</scope>
    <scope>VARIANT ASN-27</scope>
    <source>
        <tissue>Liver</tissue>
    </source>
</reference>
<proteinExistence type="evidence at protein level"/>
<sequence>MDPNCSCATGGSCTCTGSCKCKECKCTSCKKSCCSCCPMSCAKCAQGCICKGASEKCSCCA</sequence>
<gene>
    <name type="primary">MT1A</name>
    <name type="synonym">MT1S</name>
</gene>
<feature type="chain" id="PRO_0000197234" description="Metallothionein-1A">
    <location>
        <begin position="1"/>
        <end position="61"/>
    </location>
</feature>
<feature type="region of interest" description="Beta">
    <location>
        <begin position="1"/>
        <end position="29"/>
    </location>
</feature>
<feature type="region of interest" description="Alpha">
    <location>
        <begin position="30"/>
        <end position="61"/>
    </location>
</feature>
<feature type="binding site" evidence="1">
    <location>
        <position position="5"/>
    </location>
    <ligand>
        <name>a divalent metal cation</name>
        <dbReference type="ChEBI" id="CHEBI:60240"/>
        <label>1</label>
        <note>in cluster B</note>
    </ligand>
</feature>
<feature type="binding site" evidence="1">
    <location>
        <position position="7"/>
    </location>
    <ligand>
        <name>a divalent metal cation</name>
        <dbReference type="ChEBI" id="CHEBI:60240"/>
        <label>1</label>
        <note>in cluster B</note>
    </ligand>
</feature>
<feature type="binding site" evidence="1">
    <location>
        <position position="7"/>
    </location>
    <ligand>
        <name>a divalent metal cation</name>
        <dbReference type="ChEBI" id="CHEBI:60240"/>
        <label>2</label>
        <note>in cluster B</note>
    </ligand>
</feature>
<feature type="binding site" evidence="1">
    <location>
        <position position="13"/>
    </location>
    <ligand>
        <name>a divalent metal cation</name>
        <dbReference type="ChEBI" id="CHEBI:60240"/>
        <label>2</label>
        <note>in cluster B</note>
    </ligand>
</feature>
<feature type="binding site" evidence="1">
    <location>
        <position position="15"/>
    </location>
    <ligand>
        <name>a divalent metal cation</name>
        <dbReference type="ChEBI" id="CHEBI:60240"/>
        <label>2</label>
        <note>in cluster B</note>
    </ligand>
</feature>
<feature type="binding site" evidence="1">
    <location>
        <position position="15"/>
    </location>
    <ligand>
        <name>a divalent metal cation</name>
        <dbReference type="ChEBI" id="CHEBI:60240"/>
        <label>3</label>
        <note>in cluster B</note>
    </ligand>
</feature>
<feature type="binding site" evidence="1">
    <location>
        <position position="19"/>
    </location>
    <ligand>
        <name>a divalent metal cation</name>
        <dbReference type="ChEBI" id="CHEBI:60240"/>
        <label>3</label>
        <note>in cluster B</note>
    </ligand>
</feature>
<feature type="binding site" evidence="1">
    <location>
        <position position="21"/>
    </location>
    <ligand>
        <name>a divalent metal cation</name>
        <dbReference type="ChEBI" id="CHEBI:60240"/>
        <label>1</label>
        <note>in cluster B</note>
    </ligand>
</feature>
<feature type="binding site" evidence="1">
    <location>
        <position position="24"/>
    </location>
    <ligand>
        <name>a divalent metal cation</name>
        <dbReference type="ChEBI" id="CHEBI:60240"/>
        <label>1</label>
        <note>in cluster B</note>
    </ligand>
</feature>
<feature type="binding site" evidence="1">
    <location>
        <position position="24"/>
    </location>
    <ligand>
        <name>a divalent metal cation</name>
        <dbReference type="ChEBI" id="CHEBI:60240"/>
        <label>3</label>
        <note>in cluster B</note>
    </ligand>
</feature>
<feature type="binding site" evidence="1">
    <location>
        <position position="26"/>
    </location>
    <ligand>
        <name>a divalent metal cation</name>
        <dbReference type="ChEBI" id="CHEBI:60240"/>
        <label>2</label>
        <note>in cluster B</note>
    </ligand>
</feature>
<feature type="binding site" evidence="1">
    <location>
        <position position="29"/>
    </location>
    <ligand>
        <name>a divalent metal cation</name>
        <dbReference type="ChEBI" id="CHEBI:60240"/>
        <label>3</label>
        <note>in cluster B</note>
    </ligand>
</feature>
<feature type="binding site" evidence="1">
    <location>
        <position position="33"/>
    </location>
    <ligand>
        <name>a divalent metal cation</name>
        <dbReference type="ChEBI" id="CHEBI:60240"/>
        <label>4</label>
        <note>in cluster A</note>
    </ligand>
</feature>
<feature type="binding site" evidence="1">
    <location>
        <position position="34"/>
    </location>
    <ligand>
        <name>a divalent metal cation</name>
        <dbReference type="ChEBI" id="CHEBI:60240"/>
        <label>4</label>
        <note>in cluster A</note>
    </ligand>
</feature>
<feature type="binding site" evidence="1">
    <location>
        <position position="34"/>
    </location>
    <ligand>
        <name>a divalent metal cation</name>
        <dbReference type="ChEBI" id="CHEBI:60240"/>
        <label>5</label>
        <note>in cluster A</note>
    </ligand>
</feature>
<feature type="binding site" evidence="1">
    <location>
        <position position="36"/>
    </location>
    <ligand>
        <name>a divalent metal cation</name>
        <dbReference type="ChEBI" id="CHEBI:60240"/>
        <label>5</label>
        <note>in cluster A</note>
    </ligand>
</feature>
<feature type="binding site" evidence="1">
    <location>
        <position position="37"/>
    </location>
    <ligand>
        <name>a divalent metal cation</name>
        <dbReference type="ChEBI" id="CHEBI:60240"/>
        <label>5</label>
        <note>in cluster A</note>
    </ligand>
</feature>
<feature type="binding site" evidence="1">
    <location>
        <position position="37"/>
    </location>
    <ligand>
        <name>a divalent metal cation</name>
        <dbReference type="ChEBI" id="CHEBI:60240"/>
        <label>6</label>
        <note>in cluster A</note>
    </ligand>
</feature>
<feature type="binding site" evidence="1">
    <location>
        <position position="41"/>
    </location>
    <ligand>
        <name>a divalent metal cation</name>
        <dbReference type="ChEBI" id="CHEBI:60240"/>
        <label>6</label>
        <note>in cluster A</note>
    </ligand>
</feature>
<feature type="binding site" evidence="1">
    <location>
        <position position="44"/>
    </location>
    <ligand>
        <name>a divalent metal cation</name>
        <dbReference type="ChEBI" id="CHEBI:60240"/>
        <label>4</label>
        <note>in cluster A</note>
    </ligand>
</feature>
<feature type="binding site" evidence="1">
    <location>
        <position position="44"/>
    </location>
    <ligand>
        <name>a divalent metal cation</name>
        <dbReference type="ChEBI" id="CHEBI:60240"/>
        <label>6</label>
        <note>in cluster A</note>
    </ligand>
</feature>
<feature type="binding site" evidence="1">
    <location>
        <position position="48"/>
    </location>
    <ligand>
        <name>a divalent metal cation</name>
        <dbReference type="ChEBI" id="CHEBI:60240"/>
        <label>4</label>
        <note>in cluster A</note>
    </ligand>
</feature>
<feature type="binding site" evidence="1">
    <location>
        <position position="50"/>
    </location>
    <ligand>
        <name>a divalent metal cation</name>
        <dbReference type="ChEBI" id="CHEBI:60240"/>
        <label>5</label>
        <note>in cluster A</note>
    </ligand>
</feature>
<feature type="binding site" evidence="1">
    <location>
        <position position="50"/>
    </location>
    <ligand>
        <name>a divalent metal cation</name>
        <dbReference type="ChEBI" id="CHEBI:60240"/>
        <label>7</label>
        <note>in cluster A</note>
    </ligand>
</feature>
<feature type="binding site" evidence="1">
    <location>
        <position position="57"/>
    </location>
    <ligand>
        <name>a divalent metal cation</name>
        <dbReference type="ChEBI" id="CHEBI:60240"/>
        <label>7</label>
        <note>in cluster A</note>
    </ligand>
</feature>
<feature type="binding site" evidence="1">
    <location>
        <position position="59"/>
    </location>
    <ligand>
        <name>a divalent metal cation</name>
        <dbReference type="ChEBI" id="CHEBI:60240"/>
        <label>7</label>
        <note>in cluster A</note>
    </ligand>
</feature>
<feature type="binding site" evidence="1">
    <location>
        <position position="60"/>
    </location>
    <ligand>
        <name>a divalent metal cation</name>
        <dbReference type="ChEBI" id="CHEBI:60240"/>
        <label>6</label>
        <note>in cluster A</note>
    </ligand>
</feature>
<feature type="binding site" evidence="1">
    <location>
        <position position="60"/>
    </location>
    <ligand>
        <name>a divalent metal cation</name>
        <dbReference type="ChEBI" id="CHEBI:60240"/>
        <label>7</label>
        <note>in cluster A</note>
    </ligand>
</feature>
<feature type="modified residue" description="N-acetylmethionine" evidence="2">
    <location>
        <position position="1"/>
    </location>
</feature>
<feature type="modified residue" description="Phosphoserine" evidence="1">
    <location>
        <position position="58"/>
    </location>
</feature>
<feature type="sequence variant" id="VAR_060727" description="In dbSNP:rs11640851." evidence="3 4">
    <original>T</original>
    <variation>N</variation>
    <location>
        <position position="27"/>
    </location>
</feature>
<feature type="sequence variant" id="VAR_059436" description="In dbSNP:rs8052394.">
    <original>K</original>
    <variation>R</variation>
    <location>
        <position position="51"/>
    </location>
</feature>
<keyword id="KW-0007">Acetylation</keyword>
<keyword id="KW-0104">Cadmium</keyword>
<keyword id="KW-0186">Copper</keyword>
<keyword id="KW-0479">Metal-binding</keyword>
<keyword id="KW-0480">Metal-thiolate cluster</keyword>
<keyword id="KW-0597">Phosphoprotein</keyword>
<keyword id="KW-1267">Proteomics identification</keyword>
<keyword id="KW-1185">Reference proteome</keyword>
<keyword id="KW-0862">Zinc</keyword>
<accession>P04731</accession>
<accession>Q86YX5</accession>
<dbReference type="EMBL" id="K01383">
    <property type="protein sequence ID" value="AAA59586.1"/>
    <property type="molecule type" value="Genomic_DNA"/>
</dbReference>
<dbReference type="EMBL" id="AY028617">
    <property type="protein sequence ID" value="AAK26162.1"/>
    <property type="molecule type" value="mRNA"/>
</dbReference>
<dbReference type="EMBL" id="AF348995">
    <property type="protein sequence ID" value="AAO32955.1"/>
    <property type="molecule type" value="mRNA"/>
</dbReference>
<dbReference type="EMBL" id="AC026461">
    <property type="status" value="NOT_ANNOTATED_CDS"/>
    <property type="molecule type" value="Genomic_DNA"/>
</dbReference>
<dbReference type="EMBL" id="BC029475">
    <property type="protein sequence ID" value="AAH29475.1"/>
    <property type="molecule type" value="mRNA"/>
</dbReference>
<dbReference type="CCDS" id="CCDS32454.1"/>
<dbReference type="PIR" id="A24502">
    <property type="entry name" value="SMHU1A"/>
</dbReference>
<dbReference type="RefSeq" id="NP_005937.2">
    <property type="nucleotide sequence ID" value="NM_005946.3"/>
</dbReference>
<dbReference type="SMR" id="P04731"/>
<dbReference type="BioGRID" id="110595">
    <property type="interactions" value="2"/>
</dbReference>
<dbReference type="FunCoup" id="P04731">
    <property type="interactions" value="56"/>
</dbReference>
<dbReference type="IntAct" id="P04731">
    <property type="interactions" value="4"/>
</dbReference>
<dbReference type="MINT" id="P04731"/>
<dbReference type="STRING" id="9606.ENSP00000290705"/>
<dbReference type="DrugBank" id="DB00958">
    <property type="generic name" value="Carboplatin"/>
</dbReference>
<dbReference type="DrugBank" id="DB00515">
    <property type="generic name" value="Cisplatin"/>
</dbReference>
<dbReference type="DrugBank" id="DB09130">
    <property type="generic name" value="Copper"/>
</dbReference>
<dbReference type="DrugBank" id="DB00435">
    <property type="generic name" value="Nitric Oxide"/>
</dbReference>
<dbReference type="DrugBank" id="DB00526">
    <property type="generic name" value="Oxaliplatin"/>
</dbReference>
<dbReference type="DrugBank" id="DB12965">
    <property type="generic name" value="Silver"/>
</dbReference>
<dbReference type="DrugBank" id="DB01593">
    <property type="generic name" value="Zinc"/>
</dbReference>
<dbReference type="DrugBank" id="DB14487">
    <property type="generic name" value="Zinc acetate"/>
</dbReference>
<dbReference type="DrugBank" id="DB14533">
    <property type="generic name" value="Zinc chloride"/>
</dbReference>
<dbReference type="DrugBank" id="DB14548">
    <property type="generic name" value="Zinc sulfate, unspecified form"/>
</dbReference>
<dbReference type="iPTMnet" id="P04731"/>
<dbReference type="PhosphoSitePlus" id="P04731"/>
<dbReference type="BioMuta" id="MT1A"/>
<dbReference type="jPOST" id="P04731"/>
<dbReference type="MassIVE" id="P04731"/>
<dbReference type="PaxDb" id="9606-ENSP00000478425"/>
<dbReference type="PeptideAtlas" id="P04731"/>
<dbReference type="ProteomicsDB" id="51737"/>
<dbReference type="Antibodypedia" id="58438">
    <property type="antibodies" value="75 antibodies from 16 providers"/>
</dbReference>
<dbReference type="DNASU" id="4489"/>
<dbReference type="Ensembl" id="ENST00000290705.12">
    <property type="protein sequence ID" value="ENSP00000290705.8"/>
    <property type="gene ID" value="ENSG00000205362.11"/>
</dbReference>
<dbReference type="GeneID" id="4489"/>
<dbReference type="KEGG" id="hsa:4489"/>
<dbReference type="MANE-Select" id="ENST00000290705.12">
    <property type="protein sequence ID" value="ENSP00000290705.8"/>
    <property type="RefSeq nucleotide sequence ID" value="NM_005946.3"/>
    <property type="RefSeq protein sequence ID" value="NP_005937.2"/>
</dbReference>
<dbReference type="UCSC" id="uc002ejq.5">
    <property type="organism name" value="human"/>
</dbReference>
<dbReference type="AGR" id="HGNC:7393"/>
<dbReference type="CTD" id="4489"/>
<dbReference type="DisGeNET" id="4489"/>
<dbReference type="GeneCards" id="MT1A"/>
<dbReference type="HGNC" id="HGNC:7393">
    <property type="gene designation" value="MT1A"/>
</dbReference>
<dbReference type="HPA" id="ENSG00000205362">
    <property type="expression patterns" value="Tissue enhanced (adipose tissue, liver)"/>
</dbReference>
<dbReference type="MIM" id="156350">
    <property type="type" value="gene"/>
</dbReference>
<dbReference type="neXtProt" id="NX_P04731"/>
<dbReference type="OpenTargets" id="ENSG00000205362"/>
<dbReference type="PharmGKB" id="PA31198"/>
<dbReference type="VEuPathDB" id="HostDB:ENSG00000205362"/>
<dbReference type="eggNOG" id="KOG4738">
    <property type="taxonomic scope" value="Eukaryota"/>
</dbReference>
<dbReference type="GeneTree" id="ENSGT00950000182967"/>
<dbReference type="HOGENOM" id="CLU_171204_2_0_1"/>
<dbReference type="InParanoid" id="P04731"/>
<dbReference type="OMA" id="HICETQC"/>
<dbReference type="PAN-GO" id="P04731">
    <property type="GO annotations" value="8 GO annotations based on evolutionary models"/>
</dbReference>
<dbReference type="TreeFam" id="TF336054"/>
<dbReference type="PathwayCommons" id="P04731"/>
<dbReference type="Reactome" id="R-HSA-5661231">
    <property type="pathway name" value="Metallothioneins bind metals"/>
</dbReference>
<dbReference type="SignaLink" id="P04731"/>
<dbReference type="BioGRID-ORCS" id="4489">
    <property type="hits" value="49 hits in 1059 CRISPR screens"/>
</dbReference>
<dbReference type="ChiTaRS" id="MT1A">
    <property type="organism name" value="human"/>
</dbReference>
<dbReference type="GeneWiki" id="Metallothionein_1A"/>
<dbReference type="GenomeRNAi" id="4489"/>
<dbReference type="Pharos" id="P04731">
    <property type="development level" value="Tbio"/>
</dbReference>
<dbReference type="PRO" id="PR:P04731"/>
<dbReference type="Proteomes" id="UP000005640">
    <property type="component" value="Chromosome 16"/>
</dbReference>
<dbReference type="RNAct" id="P04731">
    <property type="molecule type" value="protein"/>
</dbReference>
<dbReference type="Bgee" id="ENSG00000205362">
    <property type="expression patterns" value="Expressed in layer of synovial tissue and 105 other cell types or tissues"/>
</dbReference>
<dbReference type="GO" id="GO:0005737">
    <property type="term" value="C:cytoplasm"/>
    <property type="evidence" value="ECO:0000250"/>
    <property type="project" value="UniProtKB"/>
</dbReference>
<dbReference type="GO" id="GO:0005829">
    <property type="term" value="C:cytosol"/>
    <property type="evidence" value="ECO:0000304"/>
    <property type="project" value="Reactome"/>
</dbReference>
<dbReference type="GO" id="GO:0005634">
    <property type="term" value="C:nucleus"/>
    <property type="evidence" value="ECO:0000250"/>
    <property type="project" value="UniProtKB"/>
</dbReference>
<dbReference type="GO" id="GO:0046872">
    <property type="term" value="F:metal ion binding"/>
    <property type="evidence" value="ECO:0000318"/>
    <property type="project" value="GO_Central"/>
</dbReference>
<dbReference type="GO" id="GO:0008270">
    <property type="term" value="F:zinc ion binding"/>
    <property type="evidence" value="ECO:0000250"/>
    <property type="project" value="UniProtKB"/>
</dbReference>
<dbReference type="GO" id="GO:0071276">
    <property type="term" value="P:cellular response to cadmium ion"/>
    <property type="evidence" value="ECO:0000270"/>
    <property type="project" value="UniProtKB"/>
</dbReference>
<dbReference type="GO" id="GO:0071280">
    <property type="term" value="P:cellular response to copper ion"/>
    <property type="evidence" value="ECO:0000318"/>
    <property type="project" value="GO_Central"/>
</dbReference>
<dbReference type="GO" id="GO:0071294">
    <property type="term" value="P:cellular response to zinc ion"/>
    <property type="evidence" value="ECO:0000270"/>
    <property type="project" value="UniProtKB"/>
</dbReference>
<dbReference type="GO" id="GO:0010273">
    <property type="term" value="P:detoxification of copper ion"/>
    <property type="evidence" value="ECO:0000318"/>
    <property type="project" value="GO_Central"/>
</dbReference>
<dbReference type="GO" id="GO:0006882">
    <property type="term" value="P:intracellular zinc ion homeostasis"/>
    <property type="evidence" value="ECO:0000318"/>
    <property type="project" value="GO_Central"/>
</dbReference>
<dbReference type="GO" id="GO:0045926">
    <property type="term" value="P:negative regulation of growth"/>
    <property type="evidence" value="ECO:0000250"/>
    <property type="project" value="UniProtKB"/>
</dbReference>
<dbReference type="FunFam" id="4.10.10.10:FF:000001">
    <property type="entry name" value="Metallothionein"/>
    <property type="match status" value="1"/>
</dbReference>
<dbReference type="Gene3D" id="4.10.10.10">
    <property type="entry name" value="Metallothionein Isoform II"/>
    <property type="match status" value="1"/>
</dbReference>
<dbReference type="InterPro" id="IPR017854">
    <property type="entry name" value="Metalthion_dom_sf"/>
</dbReference>
<dbReference type="InterPro" id="IPR023587">
    <property type="entry name" value="Metalthion_dom_sf_vert"/>
</dbReference>
<dbReference type="InterPro" id="IPR000006">
    <property type="entry name" value="Metalthion_vert"/>
</dbReference>
<dbReference type="InterPro" id="IPR018064">
    <property type="entry name" value="Metalthion_vert_metal_BS"/>
</dbReference>
<dbReference type="PANTHER" id="PTHR23299">
    <property type="entry name" value="METALLOTHIONEIN"/>
    <property type="match status" value="1"/>
</dbReference>
<dbReference type="PANTHER" id="PTHR23299:SF49">
    <property type="entry name" value="METALLOTHIONEIN-1A"/>
    <property type="match status" value="1"/>
</dbReference>
<dbReference type="Pfam" id="PF00131">
    <property type="entry name" value="Metallothio"/>
    <property type="match status" value="1"/>
</dbReference>
<dbReference type="PRINTS" id="PR00860">
    <property type="entry name" value="MTVERTEBRATE"/>
</dbReference>
<dbReference type="SUPFAM" id="SSF57868">
    <property type="entry name" value="Metallothionein"/>
    <property type="match status" value="1"/>
</dbReference>
<dbReference type="PROSITE" id="PS00203">
    <property type="entry name" value="METALLOTHIONEIN_VRT"/>
    <property type="match status" value="1"/>
</dbReference>
<protein>
    <recommendedName>
        <fullName>Metallothionein-1A</fullName>
        <shortName>MT-1A</shortName>
    </recommendedName>
    <alternativeName>
        <fullName>Metallothionein-IA</fullName>
        <shortName>MT-IA</shortName>
    </alternativeName>
</protein>
<organism>
    <name type="scientific">Homo sapiens</name>
    <name type="common">Human</name>
    <dbReference type="NCBI Taxonomy" id="9606"/>
    <lineage>
        <taxon>Eukaryota</taxon>
        <taxon>Metazoa</taxon>
        <taxon>Chordata</taxon>
        <taxon>Craniata</taxon>
        <taxon>Vertebrata</taxon>
        <taxon>Euteleostomi</taxon>
        <taxon>Mammalia</taxon>
        <taxon>Eutheria</taxon>
        <taxon>Euarchontoglires</taxon>
        <taxon>Primates</taxon>
        <taxon>Haplorrhini</taxon>
        <taxon>Catarrhini</taxon>
        <taxon>Hominidae</taxon>
        <taxon>Homo</taxon>
    </lineage>
</organism>
<name>MT1A_HUMAN</name>